<organism>
    <name type="scientific">Mycoplasma mobile (strain ATCC 43663 / 163K / NCTC 11711)</name>
    <name type="common">Mesomycoplasma mobile</name>
    <dbReference type="NCBI Taxonomy" id="267748"/>
    <lineage>
        <taxon>Bacteria</taxon>
        <taxon>Bacillati</taxon>
        <taxon>Mycoplasmatota</taxon>
        <taxon>Mycoplasmoidales</taxon>
        <taxon>Metamycoplasmataceae</taxon>
        <taxon>Mesomycoplasma</taxon>
    </lineage>
</organism>
<proteinExistence type="inferred from homology"/>
<gene>
    <name evidence="1" type="primary">rpoA</name>
    <name type="ordered locus">MMOB2610</name>
</gene>
<reference key="1">
    <citation type="journal article" date="2004" name="Genome Res.">
        <title>The complete genome and proteome of Mycoplasma mobile.</title>
        <authorList>
            <person name="Jaffe J.D."/>
            <person name="Stange-Thomann N."/>
            <person name="Smith C."/>
            <person name="DeCaprio D."/>
            <person name="Fisher S."/>
            <person name="Butler J."/>
            <person name="Calvo S."/>
            <person name="Elkins T."/>
            <person name="FitzGerald M.G."/>
            <person name="Hafez N."/>
            <person name="Kodira C.D."/>
            <person name="Major J."/>
            <person name="Wang S."/>
            <person name="Wilkinson J."/>
            <person name="Nicol R."/>
            <person name="Nusbaum C."/>
            <person name="Birren B."/>
            <person name="Berg H.C."/>
            <person name="Church G.M."/>
        </authorList>
    </citation>
    <scope>NUCLEOTIDE SEQUENCE [LARGE SCALE GENOMIC DNA]</scope>
    <source>
        <strain>ATCC 43663 / NCTC 11711 / 163 K</strain>
    </source>
</reference>
<sequence>MEKFIKINWTENKTKRINDFSTSFIVQPLEKGLATTLGTAIRRVLLSSISSVAPFAVKIKGVEHEFMAINKVTEDVPQILLRLRDIKIAYNPEIFEDGKIYKLSLKSNKEAGDIYAKDFILPIGAEIVNPGLLIATTAAANVLEIDVFVRAGRGYVDFEENKKYIDEIKTNLTSSISNGQYIAVDSNFSPIEKVSFSSSELNTSSVIVQEKLEMEIVTKGTIDAKNAIAQAAKILVAHLNIIGDVNSLNIKDIFEEGNTEKEHSKTQNILIQSLDLSIRSFNALKRANYTTVQQLEALSLDDLKNIKNLGEKSINEIVEKLEKYNVFLDKGEE</sequence>
<evidence type="ECO:0000255" key="1">
    <source>
        <dbReference type="HAMAP-Rule" id="MF_00059"/>
    </source>
</evidence>
<protein>
    <recommendedName>
        <fullName evidence="1">DNA-directed RNA polymerase subunit alpha</fullName>
        <shortName evidence="1">RNAP subunit alpha</shortName>
        <ecNumber evidence="1">2.7.7.6</ecNumber>
    </recommendedName>
    <alternativeName>
        <fullName evidence="1">RNA polymerase subunit alpha</fullName>
    </alternativeName>
    <alternativeName>
        <fullName evidence="1">Transcriptase subunit alpha</fullName>
    </alternativeName>
</protein>
<keyword id="KW-0240">DNA-directed RNA polymerase</keyword>
<keyword id="KW-0548">Nucleotidyltransferase</keyword>
<keyword id="KW-1185">Reference proteome</keyword>
<keyword id="KW-0804">Transcription</keyword>
<keyword id="KW-0808">Transferase</keyword>
<comment type="function">
    <text evidence="1">DNA-dependent RNA polymerase catalyzes the transcription of DNA into RNA using the four ribonucleoside triphosphates as substrates.</text>
</comment>
<comment type="catalytic activity">
    <reaction evidence="1">
        <text>RNA(n) + a ribonucleoside 5'-triphosphate = RNA(n+1) + diphosphate</text>
        <dbReference type="Rhea" id="RHEA:21248"/>
        <dbReference type="Rhea" id="RHEA-COMP:14527"/>
        <dbReference type="Rhea" id="RHEA-COMP:17342"/>
        <dbReference type="ChEBI" id="CHEBI:33019"/>
        <dbReference type="ChEBI" id="CHEBI:61557"/>
        <dbReference type="ChEBI" id="CHEBI:140395"/>
        <dbReference type="EC" id="2.7.7.6"/>
    </reaction>
</comment>
<comment type="subunit">
    <text evidence="1">Homodimer. The RNAP catalytic core consists of 2 alpha, 1 beta, 1 beta' and 1 omega subunit. When a sigma factor is associated with the core the holoenzyme is formed, which can initiate transcription.</text>
</comment>
<comment type="domain">
    <text evidence="1">The N-terminal domain is essential for RNAP assembly and basal transcription, whereas the C-terminal domain is involved in interaction with transcriptional regulators and with upstream promoter elements.</text>
</comment>
<comment type="similarity">
    <text evidence="1">Belongs to the RNA polymerase alpha chain family.</text>
</comment>
<accession>Q6KI29</accession>
<name>RPOA_MYCM1</name>
<feature type="chain" id="PRO_0000175338" description="DNA-directed RNA polymerase subunit alpha">
    <location>
        <begin position="1"/>
        <end position="333"/>
    </location>
</feature>
<feature type="region of interest" description="Alpha N-terminal domain (alpha-NTD)" evidence="1">
    <location>
        <begin position="1"/>
        <end position="246"/>
    </location>
</feature>
<feature type="region of interest" description="Alpha C-terminal domain (alpha-CTD)" evidence="1">
    <location>
        <begin position="263"/>
        <end position="333"/>
    </location>
</feature>
<dbReference type="EC" id="2.7.7.6" evidence="1"/>
<dbReference type="EMBL" id="AE017308">
    <property type="protein sequence ID" value="AAT27747.1"/>
    <property type="molecule type" value="Genomic_DNA"/>
</dbReference>
<dbReference type="RefSeq" id="WP_011264781.1">
    <property type="nucleotide sequence ID" value="NC_006908.1"/>
</dbReference>
<dbReference type="SMR" id="Q6KI29"/>
<dbReference type="STRING" id="267748.MMOB2610"/>
<dbReference type="KEGG" id="mmo:MMOB2610"/>
<dbReference type="eggNOG" id="COG0202">
    <property type="taxonomic scope" value="Bacteria"/>
</dbReference>
<dbReference type="HOGENOM" id="CLU_053084_0_1_14"/>
<dbReference type="OrthoDB" id="9805706at2"/>
<dbReference type="Proteomes" id="UP000009072">
    <property type="component" value="Chromosome"/>
</dbReference>
<dbReference type="GO" id="GO:0005737">
    <property type="term" value="C:cytoplasm"/>
    <property type="evidence" value="ECO:0007669"/>
    <property type="project" value="UniProtKB-ARBA"/>
</dbReference>
<dbReference type="GO" id="GO:0000428">
    <property type="term" value="C:DNA-directed RNA polymerase complex"/>
    <property type="evidence" value="ECO:0007669"/>
    <property type="project" value="UniProtKB-KW"/>
</dbReference>
<dbReference type="GO" id="GO:0003677">
    <property type="term" value="F:DNA binding"/>
    <property type="evidence" value="ECO:0007669"/>
    <property type="project" value="UniProtKB-UniRule"/>
</dbReference>
<dbReference type="GO" id="GO:0003899">
    <property type="term" value="F:DNA-directed RNA polymerase activity"/>
    <property type="evidence" value="ECO:0007669"/>
    <property type="project" value="UniProtKB-UniRule"/>
</dbReference>
<dbReference type="GO" id="GO:0046983">
    <property type="term" value="F:protein dimerization activity"/>
    <property type="evidence" value="ECO:0007669"/>
    <property type="project" value="InterPro"/>
</dbReference>
<dbReference type="GO" id="GO:0006351">
    <property type="term" value="P:DNA-templated transcription"/>
    <property type="evidence" value="ECO:0007669"/>
    <property type="project" value="UniProtKB-UniRule"/>
</dbReference>
<dbReference type="CDD" id="cd06928">
    <property type="entry name" value="RNAP_alpha_NTD"/>
    <property type="match status" value="1"/>
</dbReference>
<dbReference type="Gene3D" id="1.10.150.20">
    <property type="entry name" value="5' to 3' exonuclease, C-terminal subdomain"/>
    <property type="match status" value="1"/>
</dbReference>
<dbReference type="Gene3D" id="2.170.120.12">
    <property type="entry name" value="DNA-directed RNA polymerase, insert domain"/>
    <property type="match status" value="1"/>
</dbReference>
<dbReference type="Gene3D" id="3.30.1360.10">
    <property type="entry name" value="RNA polymerase, RBP11-like subunit"/>
    <property type="match status" value="1"/>
</dbReference>
<dbReference type="HAMAP" id="MF_00059">
    <property type="entry name" value="RNApol_bact_RpoA"/>
    <property type="match status" value="1"/>
</dbReference>
<dbReference type="InterPro" id="IPR011262">
    <property type="entry name" value="DNA-dir_RNA_pol_insert"/>
</dbReference>
<dbReference type="InterPro" id="IPR011263">
    <property type="entry name" value="DNA-dir_RNA_pol_RpoA/D/Rpb3"/>
</dbReference>
<dbReference type="InterPro" id="IPR011773">
    <property type="entry name" value="DNA-dir_RpoA"/>
</dbReference>
<dbReference type="InterPro" id="IPR036603">
    <property type="entry name" value="RBP11-like"/>
</dbReference>
<dbReference type="InterPro" id="IPR011260">
    <property type="entry name" value="RNAP_asu_C"/>
</dbReference>
<dbReference type="InterPro" id="IPR036643">
    <property type="entry name" value="RNApol_insert_sf"/>
</dbReference>
<dbReference type="NCBIfam" id="NF003519">
    <property type="entry name" value="PRK05182.2-5"/>
    <property type="match status" value="1"/>
</dbReference>
<dbReference type="NCBIfam" id="TIGR02027">
    <property type="entry name" value="rpoA"/>
    <property type="match status" value="1"/>
</dbReference>
<dbReference type="Pfam" id="PF01000">
    <property type="entry name" value="RNA_pol_A_bac"/>
    <property type="match status" value="1"/>
</dbReference>
<dbReference type="Pfam" id="PF03118">
    <property type="entry name" value="RNA_pol_A_CTD"/>
    <property type="match status" value="1"/>
</dbReference>
<dbReference type="Pfam" id="PF01193">
    <property type="entry name" value="RNA_pol_L"/>
    <property type="match status" value="1"/>
</dbReference>
<dbReference type="SMART" id="SM00662">
    <property type="entry name" value="RPOLD"/>
    <property type="match status" value="1"/>
</dbReference>
<dbReference type="SUPFAM" id="SSF47789">
    <property type="entry name" value="C-terminal domain of RNA polymerase alpha subunit"/>
    <property type="match status" value="1"/>
</dbReference>
<dbReference type="SUPFAM" id="SSF56553">
    <property type="entry name" value="Insert subdomain of RNA polymerase alpha subunit"/>
    <property type="match status" value="1"/>
</dbReference>
<dbReference type="SUPFAM" id="SSF55257">
    <property type="entry name" value="RBP11-like subunits of RNA polymerase"/>
    <property type="match status" value="1"/>
</dbReference>